<sequence>MAVSTNELAILAIVLLVTAVVFYTKGTRRAPLPPGPRGIPFLGNLFQFNVMRPYPQYLKWAQKYGPVFSIKLGSQRIIVLSTSEAADELFVTRSKLYSSHESPHVGFDLVSDQQRMVFMPYSREWKIVRKNVHGILGPGPSKQMRKMQDLECRIMLHDLLCHGDTSIVEDFVEGPHGKVPERHWFSIIRRYTTSLMMTLVYGRRIHRIVDNPELHQVYEMMSNMTHVSQPGRYLVDALPILRWLPDIMAPWRAEGKRMHEWEMGFWGKLFADSRTAFLNGTGLNGFVQSYLSARAEAGLEDLPGKGATEDGAGWMRDKLITYTAVSIIEAGSDTTSTAVFSFVLLMLSNPDALRRAKEEMGAVVGSSRMPDWEDEDRLPWLTACIKETLRCAPPLPLGIPHKADEDDVYNGYLIPKGSTVIGNIWAIHMDPVRYPDPTAFKPERFYNPDGKLNWASGPDTHNRDHYIFGWGRRFCSGKYLAEASMFIVLSRLIWGFDFYAASDPQTGKVKLPDVNDVDTFTDGLVTAPKIYPVGFKPRSEKHAEMIKASYRDVQNDWQSMGLAGDER</sequence>
<name>CY079_POSPM</name>
<evidence type="ECO:0000250" key="1">
    <source>
        <dbReference type="UniProtKB" id="P04798"/>
    </source>
</evidence>
<evidence type="ECO:0000255" key="2"/>
<evidence type="ECO:0000255" key="3">
    <source>
        <dbReference type="PROSITE-ProRule" id="PRU00498"/>
    </source>
</evidence>
<evidence type="ECO:0000269" key="4">
    <source>
    </source>
</evidence>
<evidence type="ECO:0000303" key="5">
    <source>
    </source>
</evidence>
<evidence type="ECO:0000305" key="6"/>
<organism>
    <name type="scientific">Postia placenta (strain ATCC 44394 / Madison 698-R)</name>
    <name type="common">Brown rot fungus</name>
    <name type="synonym">Poria monticola</name>
    <dbReference type="NCBI Taxonomy" id="561896"/>
    <lineage>
        <taxon>Eukaryota</taxon>
        <taxon>Fungi</taxon>
        <taxon>Dikarya</taxon>
        <taxon>Basidiomycota</taxon>
        <taxon>Agaricomycotina</taxon>
        <taxon>Agaricomycetes</taxon>
        <taxon>Polyporales</taxon>
        <taxon>Adustoporiaceae</taxon>
        <taxon>Rhodonia</taxon>
    </lineage>
</organism>
<gene>
    <name evidence="5" type="primary">CYP079</name>
    <name evidence="5" type="synonym">CYP5027B4v1</name>
</gene>
<comment type="function">
    <text evidence="4">Cytochrome P450 monooxygenase that is able to use dehydroabietic acid as a substrate for oxidation.</text>
</comment>
<comment type="cofactor">
    <cofactor evidence="1">
        <name>heme</name>
        <dbReference type="ChEBI" id="CHEBI:30413"/>
    </cofactor>
</comment>
<comment type="pathway">
    <text evidence="6">Secondary metabolite biosynthesis.</text>
</comment>
<comment type="subcellular location">
    <subcellularLocation>
        <location evidence="2">Membrane</location>
        <topology evidence="2">Single-pass membrane protein</topology>
    </subcellularLocation>
</comment>
<comment type="similarity">
    <text evidence="6">Belongs to the cytochrome P450 family.</text>
</comment>
<feature type="chain" id="PRO_0000451363" description="Cytochrome P450 monooxygenase 79">
    <location>
        <begin position="1"/>
        <end position="567"/>
    </location>
</feature>
<feature type="transmembrane region" description="Helical" evidence="2">
    <location>
        <begin position="7"/>
        <end position="24"/>
    </location>
</feature>
<feature type="binding site" description="axial binding residue" evidence="1">
    <location>
        <position position="475"/>
    </location>
    <ligand>
        <name>heme</name>
        <dbReference type="ChEBI" id="CHEBI:30413"/>
    </ligand>
    <ligandPart>
        <name>Fe</name>
        <dbReference type="ChEBI" id="CHEBI:18248"/>
    </ligandPart>
</feature>
<feature type="glycosylation site" description="N-linked (GlcNAc...) asparagine" evidence="3">
    <location>
        <position position="223"/>
    </location>
</feature>
<feature type="glycosylation site" description="N-linked (GlcNAc...) asparagine" evidence="3">
    <location>
        <position position="279"/>
    </location>
</feature>
<reference key="1">
    <citation type="journal article" date="2012" name="Arch. Microbiol.">
        <title>Molecular identification and functional characterization of cytochrome P450 monooxygenases from the brown-rot basidiomycete Postia placenta.</title>
        <authorList>
            <person name="Ide M."/>
            <person name="Ichinose H."/>
            <person name="Wariishi H."/>
        </authorList>
    </citation>
    <scope>NUCLEOTIDE SEQUENCE [MRNA]</scope>
    <scope>IDENTIFICATION</scope>
    <scope>FUNCTION</scope>
    <scope>CATALYTIC ACTIVITY</scope>
    <source>
        <strain>ATCC 44394 / Madison 698-R</strain>
    </source>
</reference>
<accession>F1SY75</accession>
<proteinExistence type="evidence at protein level"/>
<keyword id="KW-0325">Glycoprotein</keyword>
<keyword id="KW-0349">Heme</keyword>
<keyword id="KW-0408">Iron</keyword>
<keyword id="KW-0472">Membrane</keyword>
<keyword id="KW-0479">Metal-binding</keyword>
<keyword id="KW-0503">Monooxygenase</keyword>
<keyword id="KW-0560">Oxidoreductase</keyword>
<keyword id="KW-0812">Transmembrane</keyword>
<keyword id="KW-1133">Transmembrane helix</keyword>
<protein>
    <recommendedName>
        <fullName evidence="5">Cytochrome P450 monooxygenase 79</fullName>
        <ecNumber evidence="4">1.-.-.-</ecNumber>
    </recommendedName>
</protein>
<dbReference type="EC" id="1.-.-.-" evidence="4"/>
<dbReference type="EMBL" id="AB573286">
    <property type="protein sequence ID" value="BAK09419.1"/>
    <property type="molecule type" value="mRNA"/>
</dbReference>
<dbReference type="SMR" id="F1SY75"/>
<dbReference type="GlyCosmos" id="F1SY75">
    <property type="glycosylation" value="2 sites, No reported glycans"/>
</dbReference>
<dbReference type="GO" id="GO:0016020">
    <property type="term" value="C:membrane"/>
    <property type="evidence" value="ECO:0007669"/>
    <property type="project" value="UniProtKB-SubCell"/>
</dbReference>
<dbReference type="GO" id="GO:0020037">
    <property type="term" value="F:heme binding"/>
    <property type="evidence" value="ECO:0007669"/>
    <property type="project" value="InterPro"/>
</dbReference>
<dbReference type="GO" id="GO:0005506">
    <property type="term" value="F:iron ion binding"/>
    <property type="evidence" value="ECO:0007669"/>
    <property type="project" value="InterPro"/>
</dbReference>
<dbReference type="GO" id="GO:0004497">
    <property type="term" value="F:monooxygenase activity"/>
    <property type="evidence" value="ECO:0007669"/>
    <property type="project" value="UniProtKB-KW"/>
</dbReference>
<dbReference type="GO" id="GO:0016705">
    <property type="term" value="F:oxidoreductase activity, acting on paired donors, with incorporation or reduction of molecular oxygen"/>
    <property type="evidence" value="ECO:0007669"/>
    <property type="project" value="InterPro"/>
</dbReference>
<dbReference type="CDD" id="cd11065">
    <property type="entry name" value="CYP64-like"/>
    <property type="match status" value="1"/>
</dbReference>
<dbReference type="Gene3D" id="1.10.630.10">
    <property type="entry name" value="Cytochrome P450"/>
    <property type="match status" value="1"/>
</dbReference>
<dbReference type="InterPro" id="IPR001128">
    <property type="entry name" value="Cyt_P450"/>
</dbReference>
<dbReference type="InterPro" id="IPR002401">
    <property type="entry name" value="Cyt_P450_E_grp-I"/>
</dbReference>
<dbReference type="InterPro" id="IPR036396">
    <property type="entry name" value="Cyt_P450_sf"/>
</dbReference>
<dbReference type="InterPro" id="IPR050364">
    <property type="entry name" value="Cytochrome_P450_fung"/>
</dbReference>
<dbReference type="PANTHER" id="PTHR46300:SF2">
    <property type="entry name" value="CYTOCHROME P450 MONOOXYGENASE ALNH-RELATED"/>
    <property type="match status" value="1"/>
</dbReference>
<dbReference type="PANTHER" id="PTHR46300">
    <property type="entry name" value="P450, PUTATIVE (EUROFUNG)-RELATED-RELATED"/>
    <property type="match status" value="1"/>
</dbReference>
<dbReference type="Pfam" id="PF00067">
    <property type="entry name" value="p450"/>
    <property type="match status" value="1"/>
</dbReference>
<dbReference type="PRINTS" id="PR00463">
    <property type="entry name" value="EP450I"/>
</dbReference>
<dbReference type="PRINTS" id="PR00385">
    <property type="entry name" value="P450"/>
</dbReference>
<dbReference type="SUPFAM" id="SSF48264">
    <property type="entry name" value="Cytochrome P450"/>
    <property type="match status" value="1"/>
</dbReference>